<accession>Q4R9E0</accession>
<organism>
    <name type="scientific">Macaca fascicularis</name>
    <name type="common">Crab-eating macaque</name>
    <name type="synonym">Cynomolgus monkey</name>
    <dbReference type="NCBI Taxonomy" id="9541"/>
    <lineage>
        <taxon>Eukaryota</taxon>
        <taxon>Metazoa</taxon>
        <taxon>Chordata</taxon>
        <taxon>Craniata</taxon>
        <taxon>Vertebrata</taxon>
        <taxon>Euteleostomi</taxon>
        <taxon>Mammalia</taxon>
        <taxon>Eutheria</taxon>
        <taxon>Euarchontoglires</taxon>
        <taxon>Primates</taxon>
        <taxon>Haplorrhini</taxon>
        <taxon>Catarrhini</taxon>
        <taxon>Cercopithecidae</taxon>
        <taxon>Cercopithecinae</taxon>
        <taxon>Macaca</taxon>
    </lineage>
</organism>
<name>TECT3_MACFA</name>
<dbReference type="EMBL" id="AB168156">
    <property type="protein sequence ID" value="BAE00281.1"/>
    <property type="molecule type" value="mRNA"/>
</dbReference>
<dbReference type="RefSeq" id="NP_001271887.1">
    <property type="nucleotide sequence ID" value="NM_001284958.1"/>
</dbReference>
<dbReference type="STRING" id="9541.ENSMFAP00000003697"/>
<dbReference type="GlyCosmos" id="Q4R9E0">
    <property type="glycosylation" value="3 sites, No reported glycans"/>
</dbReference>
<dbReference type="eggNOG" id="ENOG502RKDI">
    <property type="taxonomic scope" value="Eukaryota"/>
</dbReference>
<dbReference type="Proteomes" id="UP000233100">
    <property type="component" value="Unplaced"/>
</dbReference>
<dbReference type="GO" id="GO:0016020">
    <property type="term" value="C:membrane"/>
    <property type="evidence" value="ECO:0007669"/>
    <property type="project" value="UniProtKB-SubCell"/>
</dbReference>
<dbReference type="GO" id="GO:0006915">
    <property type="term" value="P:apoptotic process"/>
    <property type="evidence" value="ECO:0007669"/>
    <property type="project" value="UniProtKB-KW"/>
</dbReference>
<dbReference type="GO" id="GO:0060271">
    <property type="term" value="P:cilium assembly"/>
    <property type="evidence" value="ECO:0000250"/>
    <property type="project" value="UniProtKB"/>
</dbReference>
<dbReference type="GO" id="GO:0007224">
    <property type="term" value="P:smoothened signaling pathway"/>
    <property type="evidence" value="ECO:0000250"/>
    <property type="project" value="UniProtKB"/>
</dbReference>
<dbReference type="InterPro" id="IPR040354">
    <property type="entry name" value="Tectonic"/>
</dbReference>
<dbReference type="InterPro" id="IPR011677">
    <property type="entry name" value="Tectonic_dom"/>
</dbReference>
<dbReference type="PANTHER" id="PTHR14611">
    <property type="entry name" value="TECTONIC FAMILY MEMBER"/>
    <property type="match status" value="1"/>
</dbReference>
<dbReference type="PANTHER" id="PTHR14611:SF4">
    <property type="entry name" value="TECTONIC-3"/>
    <property type="match status" value="1"/>
</dbReference>
<dbReference type="Pfam" id="PF07773">
    <property type="entry name" value="TCTN_DUF1619"/>
    <property type="match status" value="1"/>
</dbReference>
<proteinExistence type="evidence at transcript level"/>
<feature type="signal peptide" evidence="2">
    <location>
        <begin position="1"/>
        <end position="22"/>
    </location>
</feature>
<feature type="chain" id="PRO_0000229801" description="Tectonic-3">
    <location>
        <begin position="23"/>
        <end position="608"/>
    </location>
</feature>
<feature type="topological domain" description="Extracellular" evidence="2">
    <location>
        <begin position="23"/>
        <end position="586"/>
    </location>
</feature>
<feature type="transmembrane region" description="Helical" evidence="2">
    <location>
        <begin position="587"/>
        <end position="607"/>
    </location>
</feature>
<feature type="topological domain" description="Cytoplasmic" evidence="2">
    <location>
        <position position="608"/>
    </location>
</feature>
<feature type="region of interest" description="Disordered" evidence="3">
    <location>
        <begin position="23"/>
        <end position="58"/>
    </location>
</feature>
<feature type="compositionally biased region" description="Polar residues" evidence="3">
    <location>
        <begin position="45"/>
        <end position="54"/>
    </location>
</feature>
<feature type="glycosylation site" description="N-linked (GlcNAc...) asparagine" evidence="2">
    <location>
        <position position="78"/>
    </location>
</feature>
<feature type="glycosylation site" description="N-linked (GlcNAc...) asparagine" evidence="2">
    <location>
        <position position="179"/>
    </location>
</feature>
<feature type="glycosylation site" description="N-linked (GlcNAc...) asparagine" evidence="2">
    <location>
        <position position="347"/>
    </location>
</feature>
<gene>
    <name type="primary">TCTN3</name>
    <name type="synonym">TECT3</name>
    <name type="ORF">QtsA-10216</name>
</gene>
<keyword id="KW-0053">Apoptosis</keyword>
<keyword id="KW-0970">Cilium biogenesis/degradation</keyword>
<keyword id="KW-0325">Glycoprotein</keyword>
<keyword id="KW-0472">Membrane</keyword>
<keyword id="KW-1185">Reference proteome</keyword>
<keyword id="KW-0732">Signal</keyword>
<keyword id="KW-0812">Transmembrane</keyword>
<keyword id="KW-1133">Transmembrane helix</keyword>
<comment type="function">
    <text evidence="1">Part of the tectonic-like complex which is required for tissue-specific ciliogenesis and may regulate ciliary membrane composition. May be involved in apoptosis regulation (By similarity). Necessary for signal transduction through the sonic hedgehog (Shh) signaling pathway (By similarity).</text>
</comment>
<comment type="subunit">
    <text evidence="1">Part of the tectonic-like complex (also named B9 complex).</text>
</comment>
<comment type="subcellular location">
    <subcellularLocation>
        <location evidence="4">Membrane</location>
        <topology evidence="4">Single-pass type I membrane protein</topology>
    </subcellularLocation>
</comment>
<comment type="similarity">
    <text evidence="4">Belongs to the tectonic family.</text>
</comment>
<reference key="1">
    <citation type="submission" date="2005-06" db="EMBL/GenBank/DDBJ databases">
        <title>DNA sequences of macaque genes expressed in brain or testis and its evolutionary implications.</title>
        <authorList>
            <consortium name="International consortium for macaque cDNA sequencing and analysis"/>
        </authorList>
    </citation>
    <scope>NUCLEOTIDE SEQUENCE [LARGE SCALE MRNA]</scope>
    <source>
        <tissue>Testis</tissue>
    </source>
</reference>
<evidence type="ECO:0000250" key="1"/>
<evidence type="ECO:0000255" key="2"/>
<evidence type="ECO:0000256" key="3">
    <source>
        <dbReference type="SAM" id="MobiDB-lite"/>
    </source>
</evidence>
<evidence type="ECO:0000305" key="4"/>
<sequence length="608" mass="66083">MRTPQLALLQVFLLMFPDGVRPQPSSSPSGAVPTSLDLQPGTVGGTLQSSSEATATRPAMPGISTVVPTLVTPSAPGNRTVDLFPVLPICVCDLTPGACDINCCCDRDCYLLHPRTVFSFCLPGSVRSSSWVCVDNSLIFRSNSPFPSRVFMDSNGIRQFCVHVNNSKLNYFQKLQKVNATNFQDLAAEFGGESFTSTFQTQSPPSFYRAGDPILTYFPKWSVISLLRQPAGVGAAGLCAESNPAGFLESKSTTCTRFFKNLASSCTLDSALNAASYYNFTVLKVPRGMTDPQNMEFQVPVTLTSQANAPLLAGNTCQNVVSQVTYEIETNGTFGIQKVSVSLGQTNLTVEPGASLQQHFILHFRAFQQSTAASITSPRSGNPGYIVGKPLLALTGDVSYSMTLLRSQGNGSCSVNRHEVQFGVNAISGCKLRLKKADCSYLQQEIYQTLHGRPRPQHVAIFGNADPAQKGGWTRILNRHCNISAIICTSCCLIPVSLEIQVLWAYVGLLSNPQAHVSGVRFLYQCQSVRDSQQVTEVSLTTIVNFVDITQKPEPPRGQPKMDWKLPFDFFFPFRVAFSRGVSSQKCSVSPVLILCLLLLGVLNLETT</sequence>
<protein>
    <recommendedName>
        <fullName>Tectonic-3</fullName>
    </recommendedName>
</protein>